<reference key="1">
    <citation type="journal article" date="1999" name="Nature">
        <title>Sequence and analysis of chromosome 2 of the plant Arabidopsis thaliana.</title>
        <authorList>
            <person name="Lin X."/>
            <person name="Kaul S."/>
            <person name="Rounsley S.D."/>
            <person name="Shea T.P."/>
            <person name="Benito M.-I."/>
            <person name="Town C.D."/>
            <person name="Fujii C.Y."/>
            <person name="Mason T.M."/>
            <person name="Bowman C.L."/>
            <person name="Barnstead M.E."/>
            <person name="Feldblyum T.V."/>
            <person name="Buell C.R."/>
            <person name="Ketchum K.A."/>
            <person name="Lee J.J."/>
            <person name="Ronning C.M."/>
            <person name="Koo H.L."/>
            <person name="Moffat K.S."/>
            <person name="Cronin L.A."/>
            <person name="Shen M."/>
            <person name="Pai G."/>
            <person name="Van Aken S."/>
            <person name="Umayam L."/>
            <person name="Tallon L.J."/>
            <person name="Gill J.E."/>
            <person name="Adams M.D."/>
            <person name="Carrera A.J."/>
            <person name="Creasy T.H."/>
            <person name="Goodman H.M."/>
            <person name="Somerville C.R."/>
            <person name="Copenhaver G.P."/>
            <person name="Preuss D."/>
            <person name="Nierman W.C."/>
            <person name="White O."/>
            <person name="Eisen J.A."/>
            <person name="Salzberg S.L."/>
            <person name="Fraser C.M."/>
            <person name="Venter J.C."/>
        </authorList>
    </citation>
    <scope>NUCLEOTIDE SEQUENCE [LARGE SCALE GENOMIC DNA]</scope>
    <source>
        <strain>cv. Columbia</strain>
    </source>
</reference>
<reference key="2">
    <citation type="journal article" date="2017" name="Plant J.">
        <title>Araport11: a complete reannotation of the Arabidopsis thaliana reference genome.</title>
        <authorList>
            <person name="Cheng C.Y."/>
            <person name="Krishnakumar V."/>
            <person name="Chan A.P."/>
            <person name="Thibaud-Nissen F."/>
            <person name="Schobel S."/>
            <person name="Town C.D."/>
        </authorList>
    </citation>
    <scope>GENOME REANNOTATION</scope>
    <source>
        <strain>cv. Columbia</strain>
    </source>
</reference>
<reference key="3">
    <citation type="journal article" date="2003" name="Science">
        <title>Empirical analysis of transcriptional activity in the Arabidopsis genome.</title>
        <authorList>
            <person name="Yamada K."/>
            <person name="Lim J."/>
            <person name="Dale J.M."/>
            <person name="Chen H."/>
            <person name="Shinn P."/>
            <person name="Palm C.J."/>
            <person name="Southwick A.M."/>
            <person name="Wu H.C."/>
            <person name="Kim C.J."/>
            <person name="Nguyen M."/>
            <person name="Pham P.K."/>
            <person name="Cheuk R.F."/>
            <person name="Karlin-Newmann G."/>
            <person name="Liu S.X."/>
            <person name="Lam B."/>
            <person name="Sakano H."/>
            <person name="Wu T."/>
            <person name="Yu G."/>
            <person name="Miranda M."/>
            <person name="Quach H.L."/>
            <person name="Tripp M."/>
            <person name="Chang C.H."/>
            <person name="Lee J.M."/>
            <person name="Toriumi M.J."/>
            <person name="Chan M.M."/>
            <person name="Tang C.C."/>
            <person name="Onodera C.S."/>
            <person name="Deng J.M."/>
            <person name="Akiyama K."/>
            <person name="Ansari Y."/>
            <person name="Arakawa T."/>
            <person name="Banh J."/>
            <person name="Banno F."/>
            <person name="Bowser L."/>
            <person name="Brooks S.Y."/>
            <person name="Carninci P."/>
            <person name="Chao Q."/>
            <person name="Choy N."/>
            <person name="Enju A."/>
            <person name="Goldsmith A.D."/>
            <person name="Gurjal M."/>
            <person name="Hansen N.F."/>
            <person name="Hayashizaki Y."/>
            <person name="Johnson-Hopson C."/>
            <person name="Hsuan V.W."/>
            <person name="Iida K."/>
            <person name="Karnes M."/>
            <person name="Khan S."/>
            <person name="Koesema E."/>
            <person name="Ishida J."/>
            <person name="Jiang P.X."/>
            <person name="Jones T."/>
            <person name="Kawai J."/>
            <person name="Kamiya A."/>
            <person name="Meyers C."/>
            <person name="Nakajima M."/>
            <person name="Narusaka M."/>
            <person name="Seki M."/>
            <person name="Sakurai T."/>
            <person name="Satou M."/>
            <person name="Tamse R."/>
            <person name="Vaysberg M."/>
            <person name="Wallender E.K."/>
            <person name="Wong C."/>
            <person name="Yamamura Y."/>
            <person name="Yuan S."/>
            <person name="Shinozaki K."/>
            <person name="Davis R.W."/>
            <person name="Theologis A."/>
            <person name="Ecker J.R."/>
        </authorList>
    </citation>
    <scope>NUCLEOTIDE SEQUENCE [LARGE SCALE MRNA] (ISOFORM 1)</scope>
    <source>
        <strain>cv. Columbia</strain>
    </source>
</reference>
<reference key="4">
    <citation type="journal article" date="2004" name="Genome Res.">
        <title>Whole genome sequence comparisons and 'full-length' cDNA sequences: a combined approach to evaluate and improve Arabidopsis genome annotation.</title>
        <authorList>
            <person name="Castelli V."/>
            <person name="Aury J.-M."/>
            <person name="Jaillon O."/>
            <person name="Wincker P."/>
            <person name="Clepet C."/>
            <person name="Menard M."/>
            <person name="Cruaud C."/>
            <person name="Quetier F."/>
            <person name="Scarpelli C."/>
            <person name="Schaechter V."/>
            <person name="Temple G."/>
            <person name="Caboche M."/>
            <person name="Weissenbach J."/>
            <person name="Salanoubat M."/>
        </authorList>
    </citation>
    <scope>NUCLEOTIDE SEQUENCE [LARGE SCALE MRNA] (ISOFORM 2)</scope>
    <source>
        <strain>cv. Columbia</strain>
    </source>
</reference>
<reference key="5">
    <citation type="journal article" date="2009" name="J. Proteomics">
        <title>Phosphoproteomic analysis of nuclei-enriched fractions from Arabidopsis thaliana.</title>
        <authorList>
            <person name="Jones A.M.E."/>
            <person name="MacLean D."/>
            <person name="Studholme D.J."/>
            <person name="Serna-Sanz A."/>
            <person name="Andreasson E."/>
            <person name="Rathjen J.P."/>
            <person name="Peck S.C."/>
        </authorList>
    </citation>
    <scope>IDENTIFICATION BY MASS SPECTROMETRY [LARGE SCALE ANALYSIS]</scope>
    <source>
        <strain>cv. Columbia</strain>
    </source>
</reference>
<reference key="6">
    <citation type="journal article" date="2015" name="Plant Cell">
        <title>POLYPRENOL REDUCTASE2 deficiency is lethal in Arabidopsis due to male sterility.</title>
        <authorList>
            <person name="Jozwiak A."/>
            <person name="Gutkowska M."/>
            <person name="Gawarecka K."/>
            <person name="Surmacz L."/>
            <person name="Buczkowska A."/>
            <person name="Lichocka M."/>
            <person name="Nowakowska J."/>
            <person name="Swiezewska E."/>
        </authorList>
    </citation>
    <scope>FUNCTION</scope>
    <scope>CATALYTIC ACTIVITY</scope>
    <scope>SUBCELLULAR LOCATION</scope>
    <scope>TISSUE SPECIFICITY</scope>
    <scope>DISRUPTION PHENOTYPE</scope>
</reference>
<dbReference type="EC" id="1.3.1.94" evidence="1"/>
<dbReference type="EMBL" id="AC007195">
    <property type="protein sequence ID" value="AAD26491.2"/>
    <property type="molecule type" value="Genomic_DNA"/>
</dbReference>
<dbReference type="EMBL" id="CP002685">
    <property type="protein sequence ID" value="AEC06507.1"/>
    <property type="molecule type" value="Genomic_DNA"/>
</dbReference>
<dbReference type="EMBL" id="CP002685">
    <property type="protein sequence ID" value="AEC06508.1"/>
    <property type="molecule type" value="Genomic_DNA"/>
</dbReference>
<dbReference type="EMBL" id="CP002685">
    <property type="protein sequence ID" value="ANM63071.1"/>
    <property type="molecule type" value="Genomic_DNA"/>
</dbReference>
<dbReference type="EMBL" id="AY052296">
    <property type="protein sequence ID" value="AAK96489.1"/>
    <property type="molecule type" value="mRNA"/>
</dbReference>
<dbReference type="EMBL" id="BT002716">
    <property type="protein sequence ID" value="AAO11632.1"/>
    <property type="molecule type" value="mRNA"/>
</dbReference>
<dbReference type="EMBL" id="BX819600">
    <property type="status" value="NOT_ANNOTATED_CDS"/>
    <property type="molecule type" value="mRNA"/>
</dbReference>
<dbReference type="PIR" id="D84541">
    <property type="entry name" value="D84541"/>
</dbReference>
<dbReference type="RefSeq" id="NP_001325183.1">
    <molecule id="Q9SI62-1"/>
    <property type="nucleotide sequence ID" value="NM_001335479.1"/>
</dbReference>
<dbReference type="RefSeq" id="NP_565389.1">
    <molecule id="Q9SI62-1"/>
    <property type="nucleotide sequence ID" value="NM_127207.4"/>
</dbReference>
<dbReference type="RefSeq" id="NP_973474.1">
    <molecule id="Q9SI62-2"/>
    <property type="nucleotide sequence ID" value="NM_201745.2"/>
</dbReference>
<dbReference type="SMR" id="Q9SI62"/>
<dbReference type="BioGRID" id="1510">
    <property type="interactions" value="1"/>
</dbReference>
<dbReference type="FunCoup" id="Q9SI62">
    <property type="interactions" value="2320"/>
</dbReference>
<dbReference type="IntAct" id="Q9SI62">
    <property type="interactions" value="1"/>
</dbReference>
<dbReference type="STRING" id="3702.Q9SI62"/>
<dbReference type="iPTMnet" id="Q9SI62"/>
<dbReference type="PaxDb" id="3702-AT2G16530.1"/>
<dbReference type="EnsemblPlants" id="AT2G16530.1">
    <molecule id="Q9SI62-1"/>
    <property type="protein sequence ID" value="AT2G16530.1"/>
    <property type="gene ID" value="AT2G16530"/>
</dbReference>
<dbReference type="EnsemblPlants" id="AT2G16530.2">
    <molecule id="Q9SI62-2"/>
    <property type="protein sequence ID" value="AT2G16530.2"/>
    <property type="gene ID" value="AT2G16530"/>
</dbReference>
<dbReference type="EnsemblPlants" id="AT2G16530.4">
    <molecule id="Q9SI62-1"/>
    <property type="protein sequence ID" value="AT2G16530.4"/>
    <property type="gene ID" value="AT2G16530"/>
</dbReference>
<dbReference type="GeneID" id="816152"/>
<dbReference type="Gramene" id="AT2G16530.1">
    <molecule id="Q9SI62-1"/>
    <property type="protein sequence ID" value="AT2G16530.1"/>
    <property type="gene ID" value="AT2G16530"/>
</dbReference>
<dbReference type="Gramene" id="AT2G16530.2">
    <molecule id="Q9SI62-2"/>
    <property type="protein sequence ID" value="AT2G16530.2"/>
    <property type="gene ID" value="AT2G16530"/>
</dbReference>
<dbReference type="Gramene" id="AT2G16530.4">
    <molecule id="Q9SI62-1"/>
    <property type="protein sequence ID" value="AT2G16530.4"/>
    <property type="gene ID" value="AT2G16530"/>
</dbReference>
<dbReference type="KEGG" id="ath:AT2G16530"/>
<dbReference type="Araport" id="AT2G16530"/>
<dbReference type="TAIR" id="AT2G16530">
    <property type="gene designation" value="PPRD2"/>
</dbReference>
<dbReference type="eggNOG" id="KOG1640">
    <property type="taxonomic scope" value="Eukaryota"/>
</dbReference>
<dbReference type="HOGENOM" id="CLU_044409_1_0_1"/>
<dbReference type="InParanoid" id="Q9SI62"/>
<dbReference type="OMA" id="HFLFEIC"/>
<dbReference type="OrthoDB" id="541710at2759"/>
<dbReference type="PhylomeDB" id="Q9SI62"/>
<dbReference type="BRENDA" id="1.3.1.B13">
    <property type="organism ID" value="399"/>
</dbReference>
<dbReference type="UniPathway" id="UPA00378"/>
<dbReference type="PRO" id="PR:Q9SI62"/>
<dbReference type="Proteomes" id="UP000006548">
    <property type="component" value="Chromosome 2"/>
</dbReference>
<dbReference type="ExpressionAtlas" id="Q9SI62">
    <property type="expression patterns" value="baseline and differential"/>
</dbReference>
<dbReference type="GO" id="GO:0005783">
    <property type="term" value="C:endoplasmic reticulum"/>
    <property type="evidence" value="ECO:0000314"/>
    <property type="project" value="TAIR"/>
</dbReference>
<dbReference type="GO" id="GO:0005789">
    <property type="term" value="C:endoplasmic reticulum membrane"/>
    <property type="evidence" value="ECO:0007669"/>
    <property type="project" value="UniProtKB-SubCell"/>
</dbReference>
<dbReference type="GO" id="GO:0005794">
    <property type="term" value="C:Golgi apparatus"/>
    <property type="evidence" value="ECO:0007005"/>
    <property type="project" value="TAIR"/>
</dbReference>
<dbReference type="GO" id="GO:0160198">
    <property type="term" value="F:polyprenal reductase activity"/>
    <property type="evidence" value="ECO:0000250"/>
    <property type="project" value="UniProtKB"/>
</dbReference>
<dbReference type="GO" id="GO:0019408">
    <property type="term" value="P:dolichol biosynthetic process"/>
    <property type="evidence" value="ECO:0000250"/>
    <property type="project" value="UniProtKB"/>
</dbReference>
<dbReference type="GO" id="GO:0006488">
    <property type="term" value="P:dolichol-linked oligosaccharide biosynthetic process"/>
    <property type="evidence" value="ECO:0007669"/>
    <property type="project" value="InterPro"/>
</dbReference>
<dbReference type="GO" id="GO:0006487">
    <property type="term" value="P:protein N-linked glycosylation"/>
    <property type="evidence" value="ECO:0000315"/>
    <property type="project" value="TAIR"/>
</dbReference>
<dbReference type="InterPro" id="IPR001104">
    <property type="entry name" value="3-oxo-5_a-steroid_4-DH_C"/>
</dbReference>
<dbReference type="InterPro" id="IPR039698">
    <property type="entry name" value="Dfg10/SRD5A3"/>
</dbReference>
<dbReference type="PANTHER" id="PTHR14624">
    <property type="entry name" value="DFG10 PROTEIN"/>
    <property type="match status" value="1"/>
</dbReference>
<dbReference type="PANTHER" id="PTHR14624:SF0">
    <property type="entry name" value="POLYPRENOL REDUCTASE"/>
    <property type="match status" value="1"/>
</dbReference>
<dbReference type="Pfam" id="PF02544">
    <property type="entry name" value="Steroid_dh"/>
    <property type="match status" value="1"/>
</dbReference>
<dbReference type="PROSITE" id="PS50244">
    <property type="entry name" value="S5A_REDUCTASE"/>
    <property type="match status" value="1"/>
</dbReference>
<sequence>MVELEIVWLVRGAWITVWIVSILPLVIASIPTSKLNSFRELVLSFAGRGKILHPSSQKFTIPQKCFAHFYVIGVVWTTLLLAATWMYACKMAPLSSEEFQLSDIASRLAGGSDVFSVHKSNMTPVEHRFKVWRAVFLLLLMEIHVLRRLIESFYVFKYSPSARMHILGYFAGLFFYVTAPLSLCSNIAPEVAGFVGNQVAEFIANGKSHTSAPEFNLLSSISPLMKLGSLQWIGGAIFLWGWIHQRRCHAILGSLRENPSQAKEYIIPYGDWFGMVSSPHFLAEIVLYAGLLIASGGTDITIWLLFGFVAANLTYAAGETHRWYLRKFENYPANRHAIFPYVY</sequence>
<feature type="chain" id="PRO_0000398656" description="Polyprenal reductase 2">
    <location>
        <begin position="1"/>
        <end position="343"/>
    </location>
</feature>
<feature type="transmembrane region" description="Helical" evidence="2">
    <location>
        <begin position="12"/>
        <end position="32"/>
    </location>
</feature>
<feature type="transmembrane region" description="Helical" evidence="2">
    <location>
        <begin position="66"/>
        <end position="86"/>
    </location>
</feature>
<feature type="transmembrane region" description="Helical" evidence="2">
    <location>
        <begin position="164"/>
        <end position="184"/>
    </location>
</feature>
<feature type="transmembrane region" description="Helical" evidence="2">
    <location>
        <begin position="223"/>
        <end position="243"/>
    </location>
</feature>
<feature type="transmembrane region" description="Helical" evidence="2">
    <location>
        <begin position="266"/>
        <end position="286"/>
    </location>
</feature>
<feature type="transmembrane region" description="Helical" evidence="2">
    <location>
        <begin position="291"/>
        <end position="311"/>
    </location>
</feature>
<feature type="splice variant" id="VSP_039793" description="In isoform 2." evidence="4">
    <location>
        <position position="58"/>
    </location>
</feature>
<feature type="sequence conflict" description="In Ref. 4; BX819600." evidence="6" ref="4">
    <original>F</original>
    <variation>L</variation>
    <location>
        <position position="66"/>
    </location>
</feature>
<feature type="sequence conflict" description="In Ref. 3; AAK96489/AAO11632." evidence="6" ref="3">
    <original>F</original>
    <variation>L</variation>
    <location>
        <position position="69"/>
    </location>
</feature>
<keyword id="KW-0025">Alternative splicing</keyword>
<keyword id="KW-0256">Endoplasmic reticulum</keyword>
<keyword id="KW-0472">Membrane</keyword>
<keyword id="KW-0521">NADP</keyword>
<keyword id="KW-0560">Oxidoreductase</keyword>
<keyword id="KW-1185">Reference proteome</keyword>
<keyword id="KW-0812">Transmembrane</keyword>
<keyword id="KW-1133">Transmembrane helix</keyword>
<organism>
    <name type="scientific">Arabidopsis thaliana</name>
    <name type="common">Mouse-ear cress</name>
    <dbReference type="NCBI Taxonomy" id="3702"/>
    <lineage>
        <taxon>Eukaryota</taxon>
        <taxon>Viridiplantae</taxon>
        <taxon>Streptophyta</taxon>
        <taxon>Embryophyta</taxon>
        <taxon>Tracheophyta</taxon>
        <taxon>Spermatophyta</taxon>
        <taxon>Magnoliopsida</taxon>
        <taxon>eudicotyledons</taxon>
        <taxon>Gunneridae</taxon>
        <taxon>Pentapetalae</taxon>
        <taxon>rosids</taxon>
        <taxon>malvids</taxon>
        <taxon>Brassicales</taxon>
        <taxon>Brassicaceae</taxon>
        <taxon>Camelineae</taxon>
        <taxon>Arabidopsis</taxon>
    </lineage>
</organism>
<proteinExistence type="evidence at protein level"/>
<gene>
    <name evidence="5" type="primary">PPRD2</name>
    <name evidence="7" type="ordered locus">At2g16530</name>
    <name evidence="8" type="ORF">F1P15.9</name>
</gene>
<accession>Q9SI62</accession>
<accession>Q3EBZ6</accession>
<accession>Q941B4</accession>
<comment type="function">
    <text evidence="1 3">Plays a key role in early steps of protein N-linked glycosylation by being involved in the conversion of polyprenol into dolichol (PubMed:26628744). Acts as a polyprenal reductase that mediates the reduction of polyprenal into dolichal in a NADP-dependent mechanism (By similarity). Dolichols are required for the synthesis of dolichol-linked monosaccharides and the oligosaccharide precursor used for N-glycosylation (PubMed:26628744). Involved in the regulation of plant growth and reproductive processes (PubMed:26628744).</text>
</comment>
<comment type="catalytic activity">
    <reaction evidence="1">
        <text>a di-trans,poly-cis-dolichal + NADP(+) = a di-trans,poly-cis-polyprenal + NADPH + H(+)</text>
        <dbReference type="Rhea" id="RHEA:80727"/>
        <dbReference type="Rhea" id="RHEA-COMP:19536"/>
        <dbReference type="Rhea" id="RHEA-COMP:19537"/>
        <dbReference type="ChEBI" id="CHEBI:15378"/>
        <dbReference type="ChEBI" id="CHEBI:57783"/>
        <dbReference type="ChEBI" id="CHEBI:58349"/>
        <dbReference type="ChEBI" id="CHEBI:231623"/>
        <dbReference type="ChEBI" id="CHEBI:231637"/>
        <dbReference type="EC" id="1.3.1.94"/>
    </reaction>
    <physiologicalReaction direction="right-to-left" evidence="1">
        <dbReference type="Rhea" id="RHEA:80729"/>
    </physiologicalReaction>
</comment>
<comment type="pathway">
    <text evidence="3">Protein modification; protein glycosylation.</text>
</comment>
<comment type="subcellular location">
    <subcellularLocation>
        <location evidence="3">Endoplasmic reticulum membrane</location>
        <topology evidence="2">Multi-pass membrane protein</topology>
    </subcellularLocation>
</comment>
<comment type="alternative products">
    <event type="alternative splicing"/>
    <isoform>
        <id>Q9SI62-1</id>
        <name>1</name>
        <sequence type="displayed"/>
    </isoform>
    <isoform>
        <id>Q9SI62-2</id>
        <name>2</name>
        <sequence type="described" ref="VSP_039793"/>
    </isoform>
</comment>
<comment type="tissue specificity">
    <text evidence="3">Expressed in roots, leaves, stems and flowers.</text>
</comment>
<comment type="disruption phenotype">
    <text evidence="3">Male sterility, when homozygous. Deformed and non-viable pollen grains.</text>
</comment>
<comment type="similarity">
    <text evidence="6">Belongs to the steroid 5-alpha reductase family. Polyprenal reductase subfamily.</text>
</comment>
<comment type="caution">
    <text evidence="1 3">Was initially characterized as a polyprenol reductase, mediating the conversion of polyprenol into dolichol (PubMed:26628744). However, it was later shown to catalyze an intermediate step in this pathway and reduce polyprenal (By similarity).</text>
</comment>
<evidence type="ECO:0000250" key="1">
    <source>
        <dbReference type="UniProtKB" id="Q9H8P0"/>
    </source>
</evidence>
<evidence type="ECO:0000255" key="2"/>
<evidence type="ECO:0000269" key="3">
    <source>
    </source>
</evidence>
<evidence type="ECO:0000303" key="4">
    <source>
    </source>
</evidence>
<evidence type="ECO:0000303" key="5">
    <source>
    </source>
</evidence>
<evidence type="ECO:0000305" key="6"/>
<evidence type="ECO:0000312" key="7">
    <source>
        <dbReference type="Araport" id="AT2G16530"/>
    </source>
</evidence>
<evidence type="ECO:0000312" key="8">
    <source>
        <dbReference type="EMBL" id="AAD26491.2"/>
    </source>
</evidence>
<name>PPRD2_ARATH</name>
<protein>
    <recommendedName>
        <fullName evidence="6">Polyprenal reductase 2</fullName>
        <ecNumber evidence="1">1.3.1.94</ecNumber>
    </recommendedName>
</protein>